<sequence>MEPLWHKLSALPFFSSRPEKWEGSGAPPSLTAFIRSLFKGKALSLELYATALTHRSMVHDTTAPEITRSNQRLEFLGDSVLGLIISEYLYRRFPEGTEGELSSYRAKIVNGKSLAGFARNLDLGIHLIIGESADQQRIRTSTSTLADAFEALTGAIYLDRGLDAVREFIEEQIIDSPAFEAMVSTENNHKSRLIEHTQSHQLPPPVYTVLSEEGAEHEKTFTIEVSCNGRRLGRGTALRKKDAEQLAAEEAMGALERALTGDVAEDTPAPEETGRG</sequence>
<protein>
    <recommendedName>
        <fullName evidence="1">Ribonuclease 3</fullName>
        <ecNumber evidence="1">3.1.26.3</ecNumber>
    </recommendedName>
    <alternativeName>
        <fullName evidence="1">Ribonuclease III</fullName>
        <shortName evidence="1">RNase III</shortName>
    </alternativeName>
</protein>
<organism>
    <name type="scientific">Chlorobium luteolum (strain DSM 273 / BCRC 81028 / 2530)</name>
    <name type="common">Pelodictyon luteolum</name>
    <dbReference type="NCBI Taxonomy" id="319225"/>
    <lineage>
        <taxon>Bacteria</taxon>
        <taxon>Pseudomonadati</taxon>
        <taxon>Chlorobiota</taxon>
        <taxon>Chlorobiia</taxon>
        <taxon>Chlorobiales</taxon>
        <taxon>Chlorobiaceae</taxon>
        <taxon>Chlorobium/Pelodictyon group</taxon>
        <taxon>Pelodictyon</taxon>
    </lineage>
</organism>
<reference key="1">
    <citation type="submission" date="2005-08" db="EMBL/GenBank/DDBJ databases">
        <title>Complete sequence of Pelodictyon luteolum DSM 273.</title>
        <authorList>
            <consortium name="US DOE Joint Genome Institute"/>
            <person name="Copeland A."/>
            <person name="Lucas S."/>
            <person name="Lapidus A."/>
            <person name="Barry K."/>
            <person name="Detter J.C."/>
            <person name="Glavina T."/>
            <person name="Hammon N."/>
            <person name="Israni S."/>
            <person name="Pitluck S."/>
            <person name="Bryant D."/>
            <person name="Schmutz J."/>
            <person name="Larimer F."/>
            <person name="Land M."/>
            <person name="Kyrpides N."/>
            <person name="Ivanova N."/>
            <person name="Richardson P."/>
        </authorList>
    </citation>
    <scope>NUCLEOTIDE SEQUENCE [LARGE SCALE GENOMIC DNA]</scope>
    <source>
        <strain>DSM 273 / BCRC 81028 / 2530</strain>
    </source>
</reference>
<accession>Q3B6L3</accession>
<proteinExistence type="inferred from homology"/>
<name>RNC_CHLL3</name>
<feature type="chain" id="PRO_0000228562" description="Ribonuclease 3">
    <location>
        <begin position="1"/>
        <end position="276"/>
    </location>
</feature>
<feature type="domain" description="RNase III" evidence="1">
    <location>
        <begin position="30"/>
        <end position="161"/>
    </location>
</feature>
<feature type="domain" description="DRBM" evidence="1">
    <location>
        <begin position="188"/>
        <end position="257"/>
    </location>
</feature>
<feature type="active site" evidence="1">
    <location>
        <position position="78"/>
    </location>
</feature>
<feature type="active site" evidence="1">
    <location>
        <position position="150"/>
    </location>
</feature>
<feature type="binding site" evidence="1">
    <location>
        <position position="74"/>
    </location>
    <ligand>
        <name>Mg(2+)</name>
        <dbReference type="ChEBI" id="CHEBI:18420"/>
    </ligand>
</feature>
<feature type="binding site" evidence="1">
    <location>
        <position position="147"/>
    </location>
    <ligand>
        <name>Mg(2+)</name>
        <dbReference type="ChEBI" id="CHEBI:18420"/>
    </ligand>
</feature>
<feature type="binding site" evidence="1">
    <location>
        <position position="150"/>
    </location>
    <ligand>
        <name>Mg(2+)</name>
        <dbReference type="ChEBI" id="CHEBI:18420"/>
    </ligand>
</feature>
<evidence type="ECO:0000255" key="1">
    <source>
        <dbReference type="HAMAP-Rule" id="MF_00104"/>
    </source>
</evidence>
<keyword id="KW-0963">Cytoplasm</keyword>
<keyword id="KW-0255">Endonuclease</keyword>
<keyword id="KW-0378">Hydrolase</keyword>
<keyword id="KW-0460">Magnesium</keyword>
<keyword id="KW-0479">Metal-binding</keyword>
<keyword id="KW-0507">mRNA processing</keyword>
<keyword id="KW-0540">Nuclease</keyword>
<keyword id="KW-1185">Reference proteome</keyword>
<keyword id="KW-0694">RNA-binding</keyword>
<keyword id="KW-0698">rRNA processing</keyword>
<keyword id="KW-0699">rRNA-binding</keyword>
<keyword id="KW-0819">tRNA processing</keyword>
<gene>
    <name evidence="1" type="primary">rnc</name>
    <name type="ordered locus">Plut_0128</name>
</gene>
<comment type="function">
    <text evidence="1">Digests double-stranded RNA. Involved in the processing of primary rRNA transcript to yield the immediate precursors to the large and small rRNAs (23S and 16S). Processes some mRNAs, and tRNAs when they are encoded in the rRNA operon. Processes pre-crRNA and tracrRNA of type II CRISPR loci if present in the organism.</text>
</comment>
<comment type="catalytic activity">
    <reaction evidence="1">
        <text>Endonucleolytic cleavage to 5'-phosphomonoester.</text>
        <dbReference type="EC" id="3.1.26.3"/>
    </reaction>
</comment>
<comment type="cofactor">
    <cofactor evidence="1">
        <name>Mg(2+)</name>
        <dbReference type="ChEBI" id="CHEBI:18420"/>
    </cofactor>
</comment>
<comment type="subunit">
    <text evidence="1">Homodimer.</text>
</comment>
<comment type="subcellular location">
    <subcellularLocation>
        <location evidence="1">Cytoplasm</location>
    </subcellularLocation>
</comment>
<comment type="similarity">
    <text evidence="1">Belongs to the ribonuclease III family.</text>
</comment>
<dbReference type="EC" id="3.1.26.3" evidence="1"/>
<dbReference type="EMBL" id="CP000096">
    <property type="protein sequence ID" value="ABB23018.1"/>
    <property type="molecule type" value="Genomic_DNA"/>
</dbReference>
<dbReference type="RefSeq" id="WP_011356894.1">
    <property type="nucleotide sequence ID" value="NC_007512.1"/>
</dbReference>
<dbReference type="SMR" id="Q3B6L3"/>
<dbReference type="STRING" id="319225.Plut_0128"/>
<dbReference type="KEGG" id="plt:Plut_0128"/>
<dbReference type="eggNOG" id="COG0571">
    <property type="taxonomic scope" value="Bacteria"/>
</dbReference>
<dbReference type="HOGENOM" id="CLU_000907_1_0_10"/>
<dbReference type="OrthoDB" id="9805026at2"/>
<dbReference type="Proteomes" id="UP000002709">
    <property type="component" value="Chromosome"/>
</dbReference>
<dbReference type="GO" id="GO:0005737">
    <property type="term" value="C:cytoplasm"/>
    <property type="evidence" value="ECO:0007669"/>
    <property type="project" value="UniProtKB-SubCell"/>
</dbReference>
<dbReference type="GO" id="GO:0003725">
    <property type="term" value="F:double-stranded RNA binding"/>
    <property type="evidence" value="ECO:0007669"/>
    <property type="project" value="TreeGrafter"/>
</dbReference>
<dbReference type="GO" id="GO:0046872">
    <property type="term" value="F:metal ion binding"/>
    <property type="evidence" value="ECO:0007669"/>
    <property type="project" value="UniProtKB-KW"/>
</dbReference>
<dbReference type="GO" id="GO:0004525">
    <property type="term" value="F:ribonuclease III activity"/>
    <property type="evidence" value="ECO:0007669"/>
    <property type="project" value="UniProtKB-UniRule"/>
</dbReference>
<dbReference type="GO" id="GO:0019843">
    <property type="term" value="F:rRNA binding"/>
    <property type="evidence" value="ECO:0007669"/>
    <property type="project" value="UniProtKB-KW"/>
</dbReference>
<dbReference type="GO" id="GO:0006397">
    <property type="term" value="P:mRNA processing"/>
    <property type="evidence" value="ECO:0007669"/>
    <property type="project" value="UniProtKB-UniRule"/>
</dbReference>
<dbReference type="GO" id="GO:0010468">
    <property type="term" value="P:regulation of gene expression"/>
    <property type="evidence" value="ECO:0007669"/>
    <property type="project" value="TreeGrafter"/>
</dbReference>
<dbReference type="GO" id="GO:0006364">
    <property type="term" value="P:rRNA processing"/>
    <property type="evidence" value="ECO:0007669"/>
    <property type="project" value="UniProtKB-UniRule"/>
</dbReference>
<dbReference type="GO" id="GO:0008033">
    <property type="term" value="P:tRNA processing"/>
    <property type="evidence" value="ECO:0007669"/>
    <property type="project" value="UniProtKB-KW"/>
</dbReference>
<dbReference type="CDD" id="cd10845">
    <property type="entry name" value="DSRM_RNAse_III_family"/>
    <property type="match status" value="1"/>
</dbReference>
<dbReference type="CDD" id="cd00593">
    <property type="entry name" value="RIBOc"/>
    <property type="match status" value="1"/>
</dbReference>
<dbReference type="FunFam" id="1.10.1520.10:FF:000001">
    <property type="entry name" value="Ribonuclease 3"/>
    <property type="match status" value="1"/>
</dbReference>
<dbReference type="Gene3D" id="3.30.160.20">
    <property type="match status" value="1"/>
</dbReference>
<dbReference type="Gene3D" id="1.10.1520.10">
    <property type="entry name" value="Ribonuclease III domain"/>
    <property type="match status" value="1"/>
</dbReference>
<dbReference type="HAMAP" id="MF_00104">
    <property type="entry name" value="RNase_III"/>
    <property type="match status" value="1"/>
</dbReference>
<dbReference type="InterPro" id="IPR014720">
    <property type="entry name" value="dsRBD_dom"/>
</dbReference>
<dbReference type="InterPro" id="IPR011907">
    <property type="entry name" value="RNase_III"/>
</dbReference>
<dbReference type="InterPro" id="IPR000999">
    <property type="entry name" value="RNase_III_dom"/>
</dbReference>
<dbReference type="InterPro" id="IPR036389">
    <property type="entry name" value="RNase_III_sf"/>
</dbReference>
<dbReference type="NCBIfam" id="TIGR02191">
    <property type="entry name" value="RNaseIII"/>
    <property type="match status" value="1"/>
</dbReference>
<dbReference type="PANTHER" id="PTHR11207:SF0">
    <property type="entry name" value="RIBONUCLEASE 3"/>
    <property type="match status" value="1"/>
</dbReference>
<dbReference type="PANTHER" id="PTHR11207">
    <property type="entry name" value="RIBONUCLEASE III"/>
    <property type="match status" value="1"/>
</dbReference>
<dbReference type="Pfam" id="PF00035">
    <property type="entry name" value="dsrm"/>
    <property type="match status" value="1"/>
</dbReference>
<dbReference type="Pfam" id="PF14622">
    <property type="entry name" value="Ribonucleas_3_3"/>
    <property type="match status" value="1"/>
</dbReference>
<dbReference type="SMART" id="SM00358">
    <property type="entry name" value="DSRM"/>
    <property type="match status" value="1"/>
</dbReference>
<dbReference type="SMART" id="SM00535">
    <property type="entry name" value="RIBOc"/>
    <property type="match status" value="1"/>
</dbReference>
<dbReference type="SUPFAM" id="SSF54768">
    <property type="entry name" value="dsRNA-binding domain-like"/>
    <property type="match status" value="1"/>
</dbReference>
<dbReference type="SUPFAM" id="SSF69065">
    <property type="entry name" value="RNase III domain-like"/>
    <property type="match status" value="1"/>
</dbReference>
<dbReference type="PROSITE" id="PS50137">
    <property type="entry name" value="DS_RBD"/>
    <property type="match status" value="1"/>
</dbReference>
<dbReference type="PROSITE" id="PS00517">
    <property type="entry name" value="RNASE_3_1"/>
    <property type="match status" value="1"/>
</dbReference>
<dbReference type="PROSITE" id="PS50142">
    <property type="entry name" value="RNASE_3_2"/>
    <property type="match status" value="1"/>
</dbReference>